<gene>
    <name evidence="1" type="primary">lolB</name>
    <name type="ordered locus">Sputcn32_0799</name>
</gene>
<feature type="signal peptide" evidence="1">
    <location>
        <begin position="1"/>
        <end position="25"/>
    </location>
</feature>
<feature type="chain" id="PRO_1000021680" description="Outer-membrane lipoprotein LolB">
    <location>
        <begin position="26"/>
        <end position="214"/>
    </location>
</feature>
<feature type="lipid moiety-binding region" description="N-palmitoyl cysteine" evidence="1">
    <location>
        <position position="26"/>
    </location>
</feature>
<feature type="lipid moiety-binding region" description="S-diacylglycerol cysteine" evidence="1">
    <location>
        <position position="26"/>
    </location>
</feature>
<evidence type="ECO:0000255" key="1">
    <source>
        <dbReference type="HAMAP-Rule" id="MF_00233"/>
    </source>
</evidence>
<reference key="1">
    <citation type="submission" date="2007-04" db="EMBL/GenBank/DDBJ databases">
        <title>Complete sequence of Shewanella putrefaciens CN-32.</title>
        <authorList>
            <consortium name="US DOE Joint Genome Institute"/>
            <person name="Copeland A."/>
            <person name="Lucas S."/>
            <person name="Lapidus A."/>
            <person name="Barry K."/>
            <person name="Detter J.C."/>
            <person name="Glavina del Rio T."/>
            <person name="Hammon N."/>
            <person name="Israni S."/>
            <person name="Dalin E."/>
            <person name="Tice H."/>
            <person name="Pitluck S."/>
            <person name="Chain P."/>
            <person name="Malfatti S."/>
            <person name="Shin M."/>
            <person name="Vergez L."/>
            <person name="Schmutz J."/>
            <person name="Larimer F."/>
            <person name="Land M."/>
            <person name="Hauser L."/>
            <person name="Kyrpides N."/>
            <person name="Mikhailova N."/>
            <person name="Romine M.F."/>
            <person name="Fredrickson J."/>
            <person name="Tiedje J."/>
            <person name="Richardson P."/>
        </authorList>
    </citation>
    <scope>NUCLEOTIDE SEQUENCE [LARGE SCALE GENOMIC DNA]</scope>
    <source>
        <strain>CN-32 / ATCC BAA-453</strain>
    </source>
</reference>
<organism>
    <name type="scientific">Shewanella putrefaciens (strain CN-32 / ATCC BAA-453)</name>
    <dbReference type="NCBI Taxonomy" id="319224"/>
    <lineage>
        <taxon>Bacteria</taxon>
        <taxon>Pseudomonadati</taxon>
        <taxon>Pseudomonadota</taxon>
        <taxon>Gammaproteobacteria</taxon>
        <taxon>Alteromonadales</taxon>
        <taxon>Shewanellaceae</taxon>
        <taxon>Shewanella</taxon>
    </lineage>
</organism>
<comment type="function">
    <text evidence="1">Plays a critical role in the incorporation of lipoproteins in the outer membrane after they are released by the LolA protein.</text>
</comment>
<comment type="subunit">
    <text evidence="1">Monomer.</text>
</comment>
<comment type="subcellular location">
    <subcellularLocation>
        <location evidence="1">Cell outer membrane</location>
        <topology evidence="1">Lipid-anchor</topology>
    </subcellularLocation>
</comment>
<comment type="similarity">
    <text evidence="1">Belongs to the LolB family.</text>
</comment>
<sequence length="214" mass="23936">MNNLKRFTESIFSCIALSTLLFLGGCQTLPPADDLTPITVSHPDQAKAWELQGKLAIKTPEDKLSANLYWRHSEERDELTLTTMLGTTVLTLEATPNSAHLHIDGKDFKDNNAQDLLERVSGWSIPLADLPLWITGQIGSQDRVLSRDSKANPKQLINDQTPPSWVVEFLSWQLQSGAHIPHQLKLERGDLQLKLQINQWQALGKATIMIGEKP</sequence>
<dbReference type="EMBL" id="CP000681">
    <property type="protein sequence ID" value="ABP74529.1"/>
    <property type="molecule type" value="Genomic_DNA"/>
</dbReference>
<dbReference type="SMR" id="A4Y3J6"/>
<dbReference type="STRING" id="319224.Sputcn32_0799"/>
<dbReference type="KEGG" id="spc:Sputcn32_0799"/>
<dbReference type="eggNOG" id="COG3017">
    <property type="taxonomic scope" value="Bacteria"/>
</dbReference>
<dbReference type="HOGENOM" id="CLU_092816_1_0_6"/>
<dbReference type="GO" id="GO:0009279">
    <property type="term" value="C:cell outer membrane"/>
    <property type="evidence" value="ECO:0007669"/>
    <property type="project" value="UniProtKB-SubCell"/>
</dbReference>
<dbReference type="GO" id="GO:0044874">
    <property type="term" value="P:lipoprotein localization to outer membrane"/>
    <property type="evidence" value="ECO:0007669"/>
    <property type="project" value="UniProtKB-UniRule"/>
</dbReference>
<dbReference type="GO" id="GO:0015031">
    <property type="term" value="P:protein transport"/>
    <property type="evidence" value="ECO:0007669"/>
    <property type="project" value="UniProtKB-KW"/>
</dbReference>
<dbReference type="CDD" id="cd16326">
    <property type="entry name" value="LolB"/>
    <property type="match status" value="1"/>
</dbReference>
<dbReference type="Gene3D" id="2.50.20.10">
    <property type="entry name" value="Lipoprotein localisation LolA/LolB/LppX"/>
    <property type="match status" value="1"/>
</dbReference>
<dbReference type="HAMAP" id="MF_00233">
    <property type="entry name" value="LolB"/>
    <property type="match status" value="1"/>
</dbReference>
<dbReference type="InterPro" id="IPR029046">
    <property type="entry name" value="LolA/LolB/LppX"/>
</dbReference>
<dbReference type="InterPro" id="IPR004565">
    <property type="entry name" value="OM_lipoprot_LolB"/>
</dbReference>
<dbReference type="NCBIfam" id="TIGR00548">
    <property type="entry name" value="lolB"/>
    <property type="match status" value="1"/>
</dbReference>
<dbReference type="Pfam" id="PF03550">
    <property type="entry name" value="LolB"/>
    <property type="match status" value="1"/>
</dbReference>
<dbReference type="SUPFAM" id="SSF89392">
    <property type="entry name" value="Prokaryotic lipoproteins and lipoprotein localization factors"/>
    <property type="match status" value="1"/>
</dbReference>
<dbReference type="PROSITE" id="PS51257">
    <property type="entry name" value="PROKAR_LIPOPROTEIN"/>
    <property type="match status" value="1"/>
</dbReference>
<accession>A4Y3J6</accession>
<protein>
    <recommendedName>
        <fullName evidence="1">Outer-membrane lipoprotein LolB</fullName>
    </recommendedName>
</protein>
<keyword id="KW-0998">Cell outer membrane</keyword>
<keyword id="KW-0143">Chaperone</keyword>
<keyword id="KW-0449">Lipoprotein</keyword>
<keyword id="KW-0472">Membrane</keyword>
<keyword id="KW-0564">Palmitate</keyword>
<keyword id="KW-0653">Protein transport</keyword>
<keyword id="KW-0732">Signal</keyword>
<keyword id="KW-0813">Transport</keyword>
<name>LOLB_SHEPC</name>
<proteinExistence type="inferred from homology"/>